<feature type="chain" id="PRO_0000169847" description="Uncharacterized protein MbiA">
    <location>
        <begin position="1"/>
        <end position="161"/>
    </location>
</feature>
<reference key="1">
    <citation type="journal article" date="1993" name="DNA Seq.">
        <title>Five open reading frames upstream of the dnaK gene of E. coli.</title>
        <authorList>
            <person name="James R."/>
            <person name="Dean D.O."/>
            <person name="Debbage J."/>
        </authorList>
    </citation>
    <scope>NUCLEOTIDE SEQUENCE [GENOMIC DNA]</scope>
    <scope>INDUCTION</scope>
</reference>
<reference key="2">
    <citation type="journal article" date="1993" name="J. Bacteriol.">
        <title>The Escherichia coli heat shock gene htpY: mutational analysis, cloning, sequencing, and transcriptional regulation.</title>
        <authorList>
            <person name="Missiakas D."/>
            <person name="Georgopoulos C."/>
            <person name="Raina S."/>
        </authorList>
    </citation>
    <scope>NUCLEOTIDE SEQUENCE [GENOMIC DNA]</scope>
    <scope>INDUCTION</scope>
    <source>
        <strain>K12 / W3110 / ATCC 27325 / DSM 5911</strain>
    </source>
</reference>
<reference key="3">
    <citation type="journal article" date="1992" name="Nucleic Acids Res.">
        <title>Systematic sequencing of the Escherichia coli genome: analysis of the 0-2.4 min region.</title>
        <authorList>
            <person name="Yura T."/>
            <person name="Mori H."/>
            <person name="Nagai H."/>
            <person name="Nagata T."/>
            <person name="Ishihama A."/>
            <person name="Fujita N."/>
            <person name="Isono K."/>
            <person name="Mizobuchi K."/>
            <person name="Nakata A."/>
        </authorList>
    </citation>
    <scope>NUCLEOTIDE SEQUENCE [LARGE SCALE GENOMIC DNA]</scope>
    <source>
        <strain>K12</strain>
    </source>
</reference>
<reference key="4">
    <citation type="journal article" date="1997" name="Science">
        <title>The complete genome sequence of Escherichia coli K-12.</title>
        <authorList>
            <person name="Blattner F.R."/>
            <person name="Plunkett G. III"/>
            <person name="Bloch C.A."/>
            <person name="Perna N.T."/>
            <person name="Burland V."/>
            <person name="Riley M."/>
            <person name="Collado-Vides J."/>
            <person name="Glasner J.D."/>
            <person name="Rode C.K."/>
            <person name="Mayhew G.F."/>
            <person name="Gregor J."/>
            <person name="Davis N.W."/>
            <person name="Kirkpatrick H.A."/>
            <person name="Goeden M.A."/>
            <person name="Rose D.J."/>
            <person name="Mau B."/>
            <person name="Shao Y."/>
        </authorList>
    </citation>
    <scope>NUCLEOTIDE SEQUENCE [LARGE SCALE GENOMIC DNA]</scope>
    <source>
        <strain>K12 / MG1655 / ATCC 47076</strain>
    </source>
</reference>
<reference key="5">
    <citation type="journal article" date="2006" name="Mol. Syst. Biol.">
        <title>Highly accurate genome sequences of Escherichia coli K-12 strains MG1655 and W3110.</title>
        <authorList>
            <person name="Hayashi K."/>
            <person name="Morooka N."/>
            <person name="Yamamoto Y."/>
            <person name="Fujita K."/>
            <person name="Isono K."/>
            <person name="Choi S."/>
            <person name="Ohtsubo E."/>
            <person name="Baba T."/>
            <person name="Wanner B.L."/>
            <person name="Mori H."/>
            <person name="Horiuchi T."/>
        </authorList>
    </citation>
    <scope>NUCLEOTIDE SEQUENCE [LARGE SCALE GENOMIC DNA]</scope>
    <source>
        <strain>K12 / W3110 / ATCC 27325 / DSM 5911</strain>
    </source>
</reference>
<reference key="6">
    <citation type="journal article" date="2006" name="Genes Dev.">
        <title>Regulon and promoter analysis of the E. coli heat-shock factor, sigma32, reveals a multifaceted cellular response to heat stress.</title>
        <authorList>
            <person name="Nonaka G."/>
            <person name="Blankschien M."/>
            <person name="Herman C."/>
            <person name="Gross C.A."/>
            <person name="Rhodius V.A."/>
        </authorList>
    </citation>
    <scope>INDUCTION</scope>
    <source>
        <strain>K12 / MG1655 / ATCC 47076</strain>
    </source>
</reference>
<reference key="7">
    <citation type="journal article" date="2008" name="BMC Evol. Biol.">
        <title>The origin of a novel gene through overprinting in Escherichia coli.</title>
        <authorList>
            <person name="Delaye L."/>
            <person name="Deluna A."/>
            <person name="Lazcano A."/>
            <person name="Becerra A."/>
        </authorList>
    </citation>
    <scope>OVERLAP WITH YAAW</scope>
</reference>
<sequence length="161" mass="17637">MRVSWLESKCDTPFANNLSFISSGSSSSSSFTLASTACRNSCLCSSSIFFQVLRRNCSSNCCSISNVDISLSAFSFNRFETSSKMARYNLPCPRSLLAILSPPKCCNSPAISCQLRRCCSGCPSIDLNSSLRISTLERRVLPFSLWVSNRAKFANCSSLQC</sequence>
<name>MBIA_ECOLI</name>
<evidence type="ECO:0000250" key="1">
    <source>
        <dbReference type="UniProtKB" id="Q8XA70"/>
    </source>
</evidence>
<evidence type="ECO:0000269" key="2">
    <source>
    </source>
</evidence>
<evidence type="ECO:0000269" key="3">
    <source>
    </source>
</evidence>
<evidence type="ECO:0000269" key="4">
    <source>
    </source>
</evidence>
<evidence type="ECO:0000303" key="5">
    <source>
    </source>
</evidence>
<evidence type="ECO:0000303" key="6">
    <source>
    </source>
</evidence>
<evidence type="ECO:0000305" key="7"/>
<evidence type="ECO:0000305" key="8">
    <source>
    </source>
</evidence>
<gene>
    <name evidence="1" type="primary">mbiA</name>
    <name evidence="5" type="synonym">htgA</name>
    <name evidence="6" type="synonym">htpY</name>
    <name type="ordered locus">b0012</name>
    <name type="ordered locus">JW5001</name>
</gene>
<accession>P28697</accession>
<accession>A0A385XLV8</accession>
<accession>Q2MCH8</accession>
<dbReference type="EMBL" id="X67700">
    <property type="protein sequence ID" value="CAA47932.1"/>
    <property type="molecule type" value="Genomic_DNA"/>
</dbReference>
<dbReference type="EMBL" id="L03720">
    <property type="protein sequence ID" value="AAA23992.1"/>
    <property type="status" value="ALT_INIT"/>
    <property type="molecule type" value="Genomic_DNA"/>
</dbReference>
<dbReference type="EMBL" id="L03720">
    <property type="protein sequence ID" value="AAA23993.1"/>
    <property type="status" value="ALT_INIT"/>
    <property type="molecule type" value="Genomic_DNA"/>
</dbReference>
<dbReference type="EMBL" id="U00096">
    <property type="protein sequence ID" value="AYC08161.1"/>
    <property type="molecule type" value="Genomic_DNA"/>
</dbReference>
<dbReference type="EMBL" id="AP009048">
    <property type="protein sequence ID" value="BAE76028.1"/>
    <property type="molecule type" value="Genomic_DNA"/>
</dbReference>
<dbReference type="PIR" id="A40623">
    <property type="entry name" value="A40623"/>
</dbReference>
<dbReference type="FunCoup" id="P28697">
    <property type="interactions" value="336"/>
</dbReference>
<dbReference type="EnsemblBacteria" id="AYC08161">
    <property type="protein sequence ID" value="AYC08161"/>
    <property type="gene ID" value="b0012"/>
</dbReference>
<dbReference type="KEGG" id="ecj:JW5001"/>
<dbReference type="EchoBASE" id="EB4305"/>
<dbReference type="HOGENOM" id="CLU_1537672_0_0_6"/>
<dbReference type="InParanoid" id="P28697"/>
<dbReference type="BioCyc" id="EcoCyc:EG11509-MONOMER"/>
<dbReference type="PRO" id="PR:P28697"/>
<dbReference type="Proteomes" id="UP000000625">
    <property type="component" value="Chromosome"/>
</dbReference>
<proteinExistence type="evidence at transcript level"/>
<protein>
    <recommendedName>
        <fullName evidence="7">Uncharacterized protein MbiA</fullName>
    </recommendedName>
    <alternativeName>
        <fullName evidence="1">Modifier of biofilm</fullName>
    </alternativeName>
</protein>
<comment type="induction">
    <text evidence="2 3 4">Was originally thought to be involved in heat shock response (PubMed:8400364, PubMed:8478327), however it was later shown not to be induced by sigma-32 (rpoH) (PubMed:16818608).</text>
</comment>
<comment type="caution">
    <text evidence="7 8">This gene is encoded entirely within the yaaW gene on the opposite strand (PubMed:18226237). Disruptions of one gene are also usually disruptions in the other.</text>
</comment>
<comment type="sequence caution" evidence="7">
    <conflict type="erroneous initiation">
        <sequence resource="EMBL-CDS" id="AAA23992"/>
    </conflict>
    <text>Extended N-terminus.</text>
</comment>
<comment type="sequence caution" evidence="7">
    <conflict type="erroneous initiation">
        <sequence resource="EMBL-CDS" id="AAA23993"/>
    </conflict>
    <text>Truncated N-terminus.</text>
</comment>
<keyword id="KW-1185">Reference proteome</keyword>
<organism>
    <name type="scientific">Escherichia coli (strain K12)</name>
    <dbReference type="NCBI Taxonomy" id="83333"/>
    <lineage>
        <taxon>Bacteria</taxon>
        <taxon>Pseudomonadati</taxon>
        <taxon>Pseudomonadota</taxon>
        <taxon>Gammaproteobacteria</taxon>
        <taxon>Enterobacterales</taxon>
        <taxon>Enterobacteriaceae</taxon>
        <taxon>Escherichia</taxon>
    </lineage>
</organism>